<feature type="chain" id="PRO_0000243582" description="Glutamate-1-semialdehyde 2,1-aminomutase">
    <location>
        <begin position="1"/>
        <end position="429"/>
    </location>
</feature>
<feature type="modified residue" description="N6-(pyridoxal phosphate)lysine" evidence="1">
    <location>
        <position position="265"/>
    </location>
</feature>
<reference key="1">
    <citation type="journal article" date="2004" name="Science">
        <title>The genomic sequence of the accidental pathogen Legionella pneumophila.</title>
        <authorList>
            <person name="Chien M."/>
            <person name="Morozova I."/>
            <person name="Shi S."/>
            <person name="Sheng H."/>
            <person name="Chen J."/>
            <person name="Gomez S.M."/>
            <person name="Asamani G."/>
            <person name="Hill K."/>
            <person name="Nuara J."/>
            <person name="Feder M."/>
            <person name="Rineer J."/>
            <person name="Greenberg J.J."/>
            <person name="Steshenko V."/>
            <person name="Park S.H."/>
            <person name="Zhao B."/>
            <person name="Teplitskaya E."/>
            <person name="Edwards J.R."/>
            <person name="Pampou S."/>
            <person name="Georghiou A."/>
            <person name="Chou I.-C."/>
            <person name="Iannuccilli W."/>
            <person name="Ulz M.E."/>
            <person name="Kim D.H."/>
            <person name="Geringer-Sameth A."/>
            <person name="Goldsberry C."/>
            <person name="Morozov P."/>
            <person name="Fischer S.G."/>
            <person name="Segal G."/>
            <person name="Qu X."/>
            <person name="Rzhetsky A."/>
            <person name="Zhang P."/>
            <person name="Cayanis E."/>
            <person name="De Jong P.J."/>
            <person name="Ju J."/>
            <person name="Kalachikov S."/>
            <person name="Shuman H.A."/>
            <person name="Russo J.J."/>
        </authorList>
    </citation>
    <scope>NUCLEOTIDE SEQUENCE [LARGE SCALE GENOMIC DNA]</scope>
    <source>
        <strain>Philadelphia 1 / ATCC 33152 / DSM 7513</strain>
    </source>
</reference>
<sequence>MSRSSDLFHKAQTIIPGGVNSPVRAFKGVGGEPVFFKSGKGAYLTDVDDKQYIDYVGSWGPLILGHCHPKVIEAVDNVLHRGMSFGAPTELEIQLAEKIASLMPSIEKIRMVNSGTEATMTAIRLARGFTNKNKFIKFNGCYHGHSDSLLVKAGSGLLTLGIPSTPGIPQSITEHTLTADFNNLEQVAQLFEKYPNDIATVILEPIPGNMGFILPKIEFLKGLRELCDQYNALLIFDEVMTGFRVGLHGAQGLFGIKPDITTLGKIIGGGMPVGALGGKREIMSFLAPEGPVYQAGTLSGNPLAMAAGLATLKEIEKINFFEDLSNTTNKLTEALADAAENANIPFFAASLGGMFGFCFTDKNSVENYLDVASSDEVLFKKFFHAMLAQGVYFAPSMYEAGFVSSMHGDLEIQKTYDAAELVLNQLKSA</sequence>
<organism>
    <name type="scientific">Legionella pneumophila subsp. pneumophila (strain Philadelphia 1 / ATCC 33152 / DSM 7513)</name>
    <dbReference type="NCBI Taxonomy" id="272624"/>
    <lineage>
        <taxon>Bacteria</taxon>
        <taxon>Pseudomonadati</taxon>
        <taxon>Pseudomonadota</taxon>
        <taxon>Gammaproteobacteria</taxon>
        <taxon>Legionellales</taxon>
        <taxon>Legionellaceae</taxon>
        <taxon>Legionella</taxon>
    </lineage>
</organism>
<comment type="catalytic activity">
    <reaction evidence="1">
        <text>(S)-4-amino-5-oxopentanoate = 5-aminolevulinate</text>
        <dbReference type="Rhea" id="RHEA:14265"/>
        <dbReference type="ChEBI" id="CHEBI:57501"/>
        <dbReference type="ChEBI" id="CHEBI:356416"/>
        <dbReference type="EC" id="5.4.3.8"/>
    </reaction>
</comment>
<comment type="cofactor">
    <cofactor evidence="1">
        <name>pyridoxal 5'-phosphate</name>
        <dbReference type="ChEBI" id="CHEBI:597326"/>
    </cofactor>
</comment>
<comment type="pathway">
    <text evidence="1">Porphyrin-containing compound metabolism; protoporphyrin-IX biosynthesis; 5-aminolevulinate from L-glutamyl-tRNA(Glu): step 2/2.</text>
</comment>
<comment type="subunit">
    <text evidence="1">Homodimer.</text>
</comment>
<comment type="subcellular location">
    <subcellularLocation>
        <location evidence="1">Cytoplasm</location>
    </subcellularLocation>
</comment>
<comment type="similarity">
    <text evidence="1">Belongs to the class-III pyridoxal-phosphate-dependent aminotransferase family. HemL subfamily.</text>
</comment>
<comment type="sequence caution" evidence="2">
    <conflict type="erroneous initiation">
        <sequence resource="EMBL-CDS" id="AAU27616"/>
    </conflict>
</comment>
<evidence type="ECO:0000255" key="1">
    <source>
        <dbReference type="HAMAP-Rule" id="MF_00375"/>
    </source>
</evidence>
<evidence type="ECO:0000305" key="2"/>
<proteinExistence type="inferred from homology"/>
<name>GSA_LEGPH</name>
<protein>
    <recommendedName>
        <fullName evidence="1">Glutamate-1-semialdehyde 2,1-aminomutase</fullName>
        <shortName evidence="1">GSA</shortName>
        <ecNumber evidence="1">5.4.3.8</ecNumber>
    </recommendedName>
    <alternativeName>
        <fullName evidence="1">Glutamate-1-semialdehyde aminotransferase</fullName>
        <shortName evidence="1">GSA-AT</shortName>
    </alternativeName>
</protein>
<gene>
    <name evidence="1" type="primary">hemL</name>
    <name type="ordered locus">lpg1534</name>
</gene>
<dbReference type="EC" id="5.4.3.8" evidence="1"/>
<dbReference type="EMBL" id="AE017354">
    <property type="protein sequence ID" value="AAU27616.1"/>
    <property type="status" value="ALT_INIT"/>
    <property type="molecule type" value="Genomic_DNA"/>
</dbReference>
<dbReference type="RefSeq" id="WP_015444486.1">
    <property type="nucleotide sequence ID" value="NC_002942.5"/>
</dbReference>
<dbReference type="RefSeq" id="YP_095563.1">
    <property type="nucleotide sequence ID" value="NC_002942.5"/>
</dbReference>
<dbReference type="SMR" id="Q5ZVA6"/>
<dbReference type="STRING" id="272624.lpg1534"/>
<dbReference type="PaxDb" id="272624-lpg1534"/>
<dbReference type="GeneID" id="57035523"/>
<dbReference type="KEGG" id="lpn:lpg1534"/>
<dbReference type="PATRIC" id="fig|272624.6.peg.1607"/>
<dbReference type="eggNOG" id="COG0001">
    <property type="taxonomic scope" value="Bacteria"/>
</dbReference>
<dbReference type="HOGENOM" id="CLU_016922_1_5_6"/>
<dbReference type="OrthoDB" id="9801052at2"/>
<dbReference type="UniPathway" id="UPA00251">
    <property type="reaction ID" value="UER00317"/>
</dbReference>
<dbReference type="Proteomes" id="UP000000609">
    <property type="component" value="Chromosome"/>
</dbReference>
<dbReference type="GO" id="GO:0005737">
    <property type="term" value="C:cytoplasm"/>
    <property type="evidence" value="ECO:0007669"/>
    <property type="project" value="UniProtKB-SubCell"/>
</dbReference>
<dbReference type="GO" id="GO:0042286">
    <property type="term" value="F:glutamate-1-semialdehyde 2,1-aminomutase activity"/>
    <property type="evidence" value="ECO:0007669"/>
    <property type="project" value="UniProtKB-UniRule"/>
</dbReference>
<dbReference type="GO" id="GO:0030170">
    <property type="term" value="F:pyridoxal phosphate binding"/>
    <property type="evidence" value="ECO:0007669"/>
    <property type="project" value="InterPro"/>
</dbReference>
<dbReference type="GO" id="GO:0008483">
    <property type="term" value="F:transaminase activity"/>
    <property type="evidence" value="ECO:0007669"/>
    <property type="project" value="InterPro"/>
</dbReference>
<dbReference type="GO" id="GO:0006782">
    <property type="term" value="P:protoporphyrinogen IX biosynthetic process"/>
    <property type="evidence" value="ECO:0007669"/>
    <property type="project" value="UniProtKB-UniRule"/>
</dbReference>
<dbReference type="CDD" id="cd00610">
    <property type="entry name" value="OAT_like"/>
    <property type="match status" value="1"/>
</dbReference>
<dbReference type="FunFam" id="3.40.640.10:FF:000021">
    <property type="entry name" value="Glutamate-1-semialdehyde 2,1-aminomutase"/>
    <property type="match status" value="1"/>
</dbReference>
<dbReference type="Gene3D" id="3.90.1150.10">
    <property type="entry name" value="Aspartate Aminotransferase, domain 1"/>
    <property type="match status" value="1"/>
</dbReference>
<dbReference type="Gene3D" id="3.40.640.10">
    <property type="entry name" value="Type I PLP-dependent aspartate aminotransferase-like (Major domain)"/>
    <property type="match status" value="1"/>
</dbReference>
<dbReference type="HAMAP" id="MF_00375">
    <property type="entry name" value="HemL_aminotrans_3"/>
    <property type="match status" value="1"/>
</dbReference>
<dbReference type="InterPro" id="IPR004639">
    <property type="entry name" value="4pyrrol_synth_GluAld_NH2Trfase"/>
</dbReference>
<dbReference type="InterPro" id="IPR005814">
    <property type="entry name" value="Aminotrans_3"/>
</dbReference>
<dbReference type="InterPro" id="IPR049704">
    <property type="entry name" value="Aminotrans_3_PPA_site"/>
</dbReference>
<dbReference type="InterPro" id="IPR015424">
    <property type="entry name" value="PyrdxlP-dep_Trfase"/>
</dbReference>
<dbReference type="InterPro" id="IPR015421">
    <property type="entry name" value="PyrdxlP-dep_Trfase_major"/>
</dbReference>
<dbReference type="InterPro" id="IPR015422">
    <property type="entry name" value="PyrdxlP-dep_Trfase_small"/>
</dbReference>
<dbReference type="NCBIfam" id="TIGR00713">
    <property type="entry name" value="hemL"/>
    <property type="match status" value="1"/>
</dbReference>
<dbReference type="NCBIfam" id="NF000818">
    <property type="entry name" value="PRK00062.1"/>
    <property type="match status" value="1"/>
</dbReference>
<dbReference type="PANTHER" id="PTHR43713">
    <property type="entry name" value="GLUTAMATE-1-SEMIALDEHYDE 2,1-AMINOMUTASE"/>
    <property type="match status" value="1"/>
</dbReference>
<dbReference type="PANTHER" id="PTHR43713:SF3">
    <property type="entry name" value="GLUTAMATE-1-SEMIALDEHYDE 2,1-AMINOMUTASE 1, CHLOROPLASTIC-RELATED"/>
    <property type="match status" value="1"/>
</dbReference>
<dbReference type="Pfam" id="PF00202">
    <property type="entry name" value="Aminotran_3"/>
    <property type="match status" value="1"/>
</dbReference>
<dbReference type="SUPFAM" id="SSF53383">
    <property type="entry name" value="PLP-dependent transferases"/>
    <property type="match status" value="1"/>
</dbReference>
<dbReference type="PROSITE" id="PS00600">
    <property type="entry name" value="AA_TRANSFER_CLASS_3"/>
    <property type="match status" value="1"/>
</dbReference>
<keyword id="KW-0963">Cytoplasm</keyword>
<keyword id="KW-0413">Isomerase</keyword>
<keyword id="KW-0627">Porphyrin biosynthesis</keyword>
<keyword id="KW-0663">Pyridoxal phosphate</keyword>
<keyword id="KW-1185">Reference proteome</keyword>
<accession>Q5ZVA6</accession>